<proteinExistence type="inferred from homology"/>
<evidence type="ECO:0000250" key="1"/>
<evidence type="ECO:0000305" key="2"/>
<feature type="initiator methionine" description="Removed" evidence="1">
    <location>
        <position position="1"/>
    </location>
</feature>
<feature type="chain" id="PRO_0000154644" description="Large ribosomal subunit protein uL10">
    <location>
        <begin position="2"/>
        <end position="23" status="greater than"/>
    </location>
</feature>
<feature type="non-terminal residue">
    <location>
        <position position="23"/>
    </location>
</feature>
<reference key="1">
    <citation type="submission" date="1993-08" db="EMBL/GenBank/DDBJ databases">
        <authorList>
            <person name="Zhyvoloup A.N."/>
        </authorList>
    </citation>
    <scope>NUCLEOTIDE SEQUENCE [GENOMIC DNA]</scope>
    <source>
        <strain>ATCC 13886 / NCTC 5054</strain>
    </source>
</reference>
<organism>
    <name type="scientific">Klebsiella pneumoniae</name>
    <dbReference type="NCBI Taxonomy" id="573"/>
    <lineage>
        <taxon>Bacteria</taxon>
        <taxon>Pseudomonadati</taxon>
        <taxon>Pseudomonadota</taxon>
        <taxon>Gammaproteobacteria</taxon>
        <taxon>Enterobacterales</taxon>
        <taxon>Enterobacteriaceae</taxon>
        <taxon>Klebsiella/Raoultella group</taxon>
        <taxon>Klebsiella</taxon>
        <taxon>Klebsiella pneumoniae complex</taxon>
    </lineage>
</organism>
<dbReference type="EMBL" id="X74445">
    <property type="protein sequence ID" value="CAA52456.1"/>
    <property type="molecule type" value="Genomic_DNA"/>
</dbReference>
<dbReference type="PIR" id="S35975">
    <property type="entry name" value="S35975"/>
</dbReference>
<dbReference type="PIR" id="S35976">
    <property type="entry name" value="S35976"/>
</dbReference>
<dbReference type="GO" id="GO:1990904">
    <property type="term" value="C:ribonucleoprotein complex"/>
    <property type="evidence" value="ECO:0007669"/>
    <property type="project" value="UniProtKB-KW"/>
</dbReference>
<dbReference type="GO" id="GO:0005840">
    <property type="term" value="C:ribosome"/>
    <property type="evidence" value="ECO:0007669"/>
    <property type="project" value="UniProtKB-KW"/>
</dbReference>
<dbReference type="GO" id="GO:0019843">
    <property type="term" value="F:rRNA binding"/>
    <property type="evidence" value="ECO:0007669"/>
    <property type="project" value="UniProtKB-KW"/>
</dbReference>
<keyword id="KW-0687">Ribonucleoprotein</keyword>
<keyword id="KW-0689">Ribosomal protein</keyword>
<keyword id="KW-0694">RNA-binding</keyword>
<keyword id="KW-0699">rRNA-binding</keyword>
<sequence length="23" mass="2399">MALNLQDKQAIVAEVSEVAKGAL</sequence>
<accession>P41190</accession>
<comment type="function">
    <text evidence="1">Forms part of the ribosomal stalk, playing a central role in the interaction of the ribosome with GTP-bound translation factors.</text>
</comment>
<comment type="subunit">
    <text evidence="1">Part of the ribosomal stalk of the 50S ribosomal subunit. The N-terminus interacts with L11 and the large rRNA to form the base of the stalk. The C-terminus forms an elongated spine to which L12 dimers bind in a sequential fashion forming a multimeric L10(L12)X complex (By similarity).</text>
</comment>
<comment type="similarity">
    <text evidence="2">Belongs to the universal ribosomal protein uL10 family.</text>
</comment>
<protein>
    <recommendedName>
        <fullName evidence="2">Large ribosomal subunit protein uL10</fullName>
    </recommendedName>
    <alternativeName>
        <fullName>50S ribosomal protein L10</fullName>
    </alternativeName>
</protein>
<gene>
    <name type="primary">rplJ</name>
</gene>
<name>RL10_KLEPN</name>